<evidence type="ECO:0000255" key="1">
    <source>
        <dbReference type="HAMAP-Rule" id="MF_00812"/>
    </source>
</evidence>
<comment type="catalytic activity">
    <reaction evidence="1">
        <text>S-adenosyl-L-methionine + a thiopurine = S-adenosyl-L-homocysteine + a thiopurine S-methylether.</text>
        <dbReference type="EC" id="2.1.1.67"/>
    </reaction>
</comment>
<comment type="subcellular location">
    <subcellularLocation>
        <location evidence="1">Cytoplasm</location>
    </subcellularLocation>
</comment>
<comment type="similarity">
    <text evidence="1">Belongs to the class I-like SAM-binding methyltransferase superfamily. TPMT family.</text>
</comment>
<organism>
    <name type="scientific">Shewanella sp. (strain ANA-3)</name>
    <dbReference type="NCBI Taxonomy" id="94122"/>
    <lineage>
        <taxon>Bacteria</taxon>
        <taxon>Pseudomonadati</taxon>
        <taxon>Pseudomonadota</taxon>
        <taxon>Gammaproteobacteria</taxon>
        <taxon>Alteromonadales</taxon>
        <taxon>Shewanellaceae</taxon>
        <taxon>Shewanella</taxon>
    </lineage>
</organism>
<gene>
    <name evidence="1" type="primary">tpm</name>
    <name type="ordered locus">Shewana3_0580</name>
</gene>
<proteinExistence type="inferred from homology"/>
<name>TPMT_SHESA</name>
<dbReference type="EC" id="2.1.1.67" evidence="1"/>
<dbReference type="EMBL" id="CP000469">
    <property type="protein sequence ID" value="ABK46819.1"/>
    <property type="molecule type" value="Genomic_DNA"/>
</dbReference>
<dbReference type="RefSeq" id="WP_011715775.1">
    <property type="nucleotide sequence ID" value="NC_008577.1"/>
</dbReference>
<dbReference type="SMR" id="A0KSQ0"/>
<dbReference type="STRING" id="94122.Shewana3_0580"/>
<dbReference type="KEGG" id="shn:Shewana3_0580"/>
<dbReference type="eggNOG" id="COG0500">
    <property type="taxonomic scope" value="Bacteria"/>
</dbReference>
<dbReference type="HOGENOM" id="CLU_085515_1_0_6"/>
<dbReference type="OrthoDB" id="9778208at2"/>
<dbReference type="Proteomes" id="UP000002589">
    <property type="component" value="Chromosome"/>
</dbReference>
<dbReference type="GO" id="GO:0005737">
    <property type="term" value="C:cytoplasm"/>
    <property type="evidence" value="ECO:0007669"/>
    <property type="project" value="UniProtKB-SubCell"/>
</dbReference>
<dbReference type="GO" id="GO:0008119">
    <property type="term" value="F:thiopurine S-methyltransferase activity"/>
    <property type="evidence" value="ECO:0007669"/>
    <property type="project" value="UniProtKB-UniRule"/>
</dbReference>
<dbReference type="GO" id="GO:0032259">
    <property type="term" value="P:methylation"/>
    <property type="evidence" value="ECO:0007669"/>
    <property type="project" value="UniProtKB-KW"/>
</dbReference>
<dbReference type="GO" id="GO:0010038">
    <property type="term" value="P:response to metal ion"/>
    <property type="evidence" value="ECO:0007669"/>
    <property type="project" value="InterPro"/>
</dbReference>
<dbReference type="CDD" id="cd02440">
    <property type="entry name" value="AdoMet_MTases"/>
    <property type="match status" value="1"/>
</dbReference>
<dbReference type="FunFam" id="3.40.50.150:FF:000101">
    <property type="entry name" value="Thiopurine S-methyltransferase"/>
    <property type="match status" value="1"/>
</dbReference>
<dbReference type="Gene3D" id="3.40.50.150">
    <property type="entry name" value="Vaccinia Virus protein VP39"/>
    <property type="match status" value="1"/>
</dbReference>
<dbReference type="HAMAP" id="MF_00812">
    <property type="entry name" value="Thiopur_methtran"/>
    <property type="match status" value="1"/>
</dbReference>
<dbReference type="InterPro" id="IPR029063">
    <property type="entry name" value="SAM-dependent_MTases_sf"/>
</dbReference>
<dbReference type="InterPro" id="IPR022474">
    <property type="entry name" value="Thiopur_S-MeTfrase_Se/Te_detox"/>
</dbReference>
<dbReference type="InterPro" id="IPR025835">
    <property type="entry name" value="Thiopurine_S-MeTrfase"/>
</dbReference>
<dbReference type="InterPro" id="IPR008854">
    <property type="entry name" value="TPMT"/>
</dbReference>
<dbReference type="NCBIfam" id="NF009732">
    <property type="entry name" value="PRK13255.1"/>
    <property type="match status" value="1"/>
</dbReference>
<dbReference type="NCBIfam" id="TIGR03840">
    <property type="entry name" value="TMPT_Se_Te"/>
    <property type="match status" value="1"/>
</dbReference>
<dbReference type="PANTHER" id="PTHR10259">
    <property type="entry name" value="THIOPURINE S-METHYLTRANSFERASE"/>
    <property type="match status" value="1"/>
</dbReference>
<dbReference type="PANTHER" id="PTHR10259:SF11">
    <property type="entry name" value="THIOPURINE S-METHYLTRANSFERASE"/>
    <property type="match status" value="1"/>
</dbReference>
<dbReference type="Pfam" id="PF05724">
    <property type="entry name" value="TPMT"/>
    <property type="match status" value="1"/>
</dbReference>
<dbReference type="PIRSF" id="PIRSF023956">
    <property type="entry name" value="Thiopurine_S-methyltransferase"/>
    <property type="match status" value="1"/>
</dbReference>
<dbReference type="SUPFAM" id="SSF53335">
    <property type="entry name" value="S-adenosyl-L-methionine-dependent methyltransferases"/>
    <property type="match status" value="1"/>
</dbReference>
<dbReference type="PROSITE" id="PS51585">
    <property type="entry name" value="SAM_MT_TPMT"/>
    <property type="match status" value="1"/>
</dbReference>
<protein>
    <recommendedName>
        <fullName evidence="1">Thiopurine S-methyltransferase</fullName>
        <ecNumber evidence="1">2.1.1.67</ecNumber>
    </recommendedName>
    <alternativeName>
        <fullName evidence="1">Thiopurine methyltransferase</fullName>
    </alternativeName>
</protein>
<feature type="chain" id="PRO_1000047223" description="Thiopurine S-methyltransferase">
    <location>
        <begin position="1"/>
        <end position="218"/>
    </location>
</feature>
<feature type="binding site" evidence="1">
    <location>
        <position position="10"/>
    </location>
    <ligand>
        <name>S-adenosyl-L-methionine</name>
        <dbReference type="ChEBI" id="CHEBI:59789"/>
    </ligand>
</feature>
<feature type="binding site" evidence="1">
    <location>
        <position position="45"/>
    </location>
    <ligand>
        <name>S-adenosyl-L-methionine</name>
        <dbReference type="ChEBI" id="CHEBI:59789"/>
    </ligand>
</feature>
<feature type="binding site" evidence="1">
    <location>
        <position position="66"/>
    </location>
    <ligand>
        <name>S-adenosyl-L-methionine</name>
        <dbReference type="ChEBI" id="CHEBI:59789"/>
    </ligand>
</feature>
<feature type="binding site" evidence="1">
    <location>
        <position position="123"/>
    </location>
    <ligand>
        <name>S-adenosyl-L-methionine</name>
        <dbReference type="ChEBI" id="CHEBI:59789"/>
    </ligand>
</feature>
<accession>A0KSQ0</accession>
<sequence length="218" mass="24797">MEPGFWHEKWQQQLIGFHQQDINPFLVKYWHTLALPAGAQVFVPLCGKSLDMCFLAEQGHQVIGCELNELAVQQFFEDNQLPMQQSALGEHQHYHTEQVSLYQGDIFTLPASITGKVSGFYDRAALIAWPESMRAQYAKQLAQLLPQGSVGLLVTLDYPQEALSGPPFAVSPTWVETHLSDDFDIQLLDCQDVLADNPRFVKKEVPWLNEAAYLLRRR</sequence>
<reference key="1">
    <citation type="submission" date="2006-09" db="EMBL/GenBank/DDBJ databases">
        <title>Complete sequence of chromosome 1 of Shewanella sp. ANA-3.</title>
        <authorList>
            <person name="Copeland A."/>
            <person name="Lucas S."/>
            <person name="Lapidus A."/>
            <person name="Barry K."/>
            <person name="Detter J.C."/>
            <person name="Glavina del Rio T."/>
            <person name="Hammon N."/>
            <person name="Israni S."/>
            <person name="Dalin E."/>
            <person name="Tice H."/>
            <person name="Pitluck S."/>
            <person name="Chertkov O."/>
            <person name="Brettin T."/>
            <person name="Bruce D."/>
            <person name="Han C."/>
            <person name="Tapia R."/>
            <person name="Gilna P."/>
            <person name="Schmutz J."/>
            <person name="Larimer F."/>
            <person name="Land M."/>
            <person name="Hauser L."/>
            <person name="Kyrpides N."/>
            <person name="Kim E."/>
            <person name="Newman D."/>
            <person name="Salticov C."/>
            <person name="Konstantinidis K."/>
            <person name="Klappenback J."/>
            <person name="Tiedje J."/>
            <person name="Richardson P."/>
        </authorList>
    </citation>
    <scope>NUCLEOTIDE SEQUENCE [LARGE SCALE GENOMIC DNA]</scope>
    <source>
        <strain>ANA-3</strain>
    </source>
</reference>
<keyword id="KW-0963">Cytoplasm</keyword>
<keyword id="KW-0489">Methyltransferase</keyword>
<keyword id="KW-0949">S-adenosyl-L-methionine</keyword>
<keyword id="KW-0808">Transferase</keyword>